<accession>Q6JD68</accession>
<feature type="chain" id="PRO_0000455980" description="Taxoid 2-alpha-hydroxylase">
    <location>
        <begin position="1"/>
        <end position="495"/>
    </location>
</feature>
<feature type="transmembrane region" description="Helical" evidence="2">
    <location>
        <begin position="17"/>
        <end position="37"/>
    </location>
</feature>
<feature type="binding site" description="axial binding residue" evidence="1">
    <location>
        <position position="441"/>
    </location>
    <ligand>
        <name>heme</name>
        <dbReference type="ChEBI" id="CHEBI:30413"/>
    </ligand>
    <ligandPart>
        <name>Fe</name>
        <dbReference type="ChEBI" id="CHEBI:18248"/>
    </ligandPart>
</feature>
<name>T2AH_TAXCA</name>
<keyword id="KW-0256">Endoplasmic reticulum</keyword>
<keyword id="KW-0349">Heme</keyword>
<keyword id="KW-0408">Iron</keyword>
<keyword id="KW-0472">Membrane</keyword>
<keyword id="KW-0479">Metal-binding</keyword>
<keyword id="KW-0492">Microsome</keyword>
<keyword id="KW-0503">Monooxygenase</keyword>
<keyword id="KW-0560">Oxidoreductase</keyword>
<keyword id="KW-0876">Taxol biosynthesis</keyword>
<keyword id="KW-0812">Transmembrane</keyword>
<keyword id="KW-1133">Transmembrane helix</keyword>
<organism>
    <name type="scientific">Taxus canadensis</name>
    <name type="common">Canadian yew</name>
    <dbReference type="NCBI Taxonomy" id="88032"/>
    <lineage>
        <taxon>Eukaryota</taxon>
        <taxon>Viridiplantae</taxon>
        <taxon>Streptophyta</taxon>
        <taxon>Embryophyta</taxon>
        <taxon>Tracheophyta</taxon>
        <taxon>Spermatophyta</taxon>
        <taxon>Pinopsida</taxon>
        <taxon>Pinidae</taxon>
        <taxon>Conifers II</taxon>
        <taxon>Cupressales</taxon>
        <taxon>Taxaceae</taxon>
        <taxon>Taxus</taxon>
    </lineage>
</organism>
<comment type="function">
    <text evidence="3">Catalyzes the conversion of taxusin to 2-alpha-hydroxytaxusin in taxol biosynthesis (PubMed:15178487). Catalyzes the conversion of 7-beta-hydroxytaxusin to 2-alpha-7-beta-hydroxytaxusin in taxol biosynthesis (PubMed:15178487).</text>
</comment>
<comment type="catalytic activity">
    <reaction evidence="3">
        <text>taxusin + reduced [NADPH--hemoprotein reductase] + O2 = 2alpha-hydroxytaxusin + oxidized [NADPH--hemoprotein reductase] + H2O + H(+)</text>
        <dbReference type="Rhea" id="RHEA:71399"/>
        <dbReference type="Rhea" id="RHEA-COMP:11964"/>
        <dbReference type="Rhea" id="RHEA-COMP:11965"/>
        <dbReference type="ChEBI" id="CHEBI:15377"/>
        <dbReference type="ChEBI" id="CHEBI:15378"/>
        <dbReference type="ChEBI" id="CHEBI:15379"/>
        <dbReference type="ChEBI" id="CHEBI:57618"/>
        <dbReference type="ChEBI" id="CHEBI:58210"/>
        <dbReference type="ChEBI" id="CHEBI:63664"/>
        <dbReference type="ChEBI" id="CHEBI:190505"/>
    </reaction>
    <physiologicalReaction direction="left-to-right" evidence="3">
        <dbReference type="Rhea" id="RHEA:71400"/>
    </physiologicalReaction>
</comment>
<comment type="catalytic activity">
    <reaction evidence="3">
        <text>7beta-hydroxytaxusin + reduced [NADPH--hemoprotein reductase] + O2 = 2alpha,7beta-dihydroxytaxusin + oxidized [NADPH--hemoprotein reductase] + H2O + H(+)</text>
        <dbReference type="Rhea" id="RHEA:71407"/>
        <dbReference type="Rhea" id="RHEA-COMP:11964"/>
        <dbReference type="Rhea" id="RHEA-COMP:11965"/>
        <dbReference type="ChEBI" id="CHEBI:15377"/>
        <dbReference type="ChEBI" id="CHEBI:15378"/>
        <dbReference type="ChEBI" id="CHEBI:15379"/>
        <dbReference type="ChEBI" id="CHEBI:57618"/>
        <dbReference type="ChEBI" id="CHEBI:58210"/>
        <dbReference type="ChEBI" id="CHEBI:63665"/>
        <dbReference type="ChEBI" id="CHEBI:190506"/>
    </reaction>
    <physiologicalReaction direction="left-to-right" evidence="3">
        <dbReference type="Rhea" id="RHEA:71408"/>
    </physiologicalReaction>
</comment>
<comment type="pathway">
    <text evidence="5">Alkaloid biosynthesis; taxol biosynthesis.</text>
</comment>
<comment type="subcellular location">
    <subcellularLocation>
        <location evidence="3">Microsome membrane</location>
        <topology evidence="2">Single-pass membrane protein</topology>
    </subcellularLocation>
</comment>
<comment type="similarity">
    <text evidence="5">Belongs to the cytochrome P450 family.</text>
</comment>
<proteinExistence type="evidence at protein level"/>
<protein>
    <recommendedName>
        <fullName evidence="4">Taxoid 2-alpha-hydroxylase</fullName>
        <ecNumber evidence="3">1.14.14.-</ecNumber>
    </recommendedName>
</protein>
<evidence type="ECO:0000250" key="1">
    <source>
        <dbReference type="UniProtKB" id="Q96242"/>
    </source>
</evidence>
<evidence type="ECO:0000255" key="2"/>
<evidence type="ECO:0000269" key="3">
    <source>
    </source>
</evidence>
<evidence type="ECO:0000303" key="4">
    <source>
    </source>
</evidence>
<evidence type="ECO:0000305" key="5"/>
<dbReference type="EC" id="1.14.14.-" evidence="3"/>
<dbReference type="EMBL" id="AY518383">
    <property type="protein sequence ID" value="AAS89065.2"/>
    <property type="molecule type" value="mRNA"/>
</dbReference>
<dbReference type="SMR" id="Q6JD68"/>
<dbReference type="KEGG" id="ag:AAS89065"/>
<dbReference type="BioCyc" id="MetaCyc:MONOMER-17469"/>
<dbReference type="UniPathway" id="UPA00842"/>
<dbReference type="GO" id="GO:0005783">
    <property type="term" value="C:endoplasmic reticulum"/>
    <property type="evidence" value="ECO:0007669"/>
    <property type="project" value="UniProtKB-KW"/>
</dbReference>
<dbReference type="GO" id="GO:0016020">
    <property type="term" value="C:membrane"/>
    <property type="evidence" value="ECO:0007669"/>
    <property type="project" value="UniProtKB-KW"/>
</dbReference>
<dbReference type="GO" id="GO:0020037">
    <property type="term" value="F:heme binding"/>
    <property type="evidence" value="ECO:0007669"/>
    <property type="project" value="InterPro"/>
</dbReference>
<dbReference type="GO" id="GO:0005506">
    <property type="term" value="F:iron ion binding"/>
    <property type="evidence" value="ECO:0007669"/>
    <property type="project" value="InterPro"/>
</dbReference>
<dbReference type="GO" id="GO:0016712">
    <property type="term" value="F:oxidoreductase activity, acting on paired donors, with incorporation or reduction of molecular oxygen, reduced flavin or flavoprotein as one donor, and incorporation of one atom of oxygen"/>
    <property type="evidence" value="ECO:0000314"/>
    <property type="project" value="UniProtKB"/>
</dbReference>
<dbReference type="GO" id="GO:0042617">
    <property type="term" value="P:paclitaxel biosynthetic process"/>
    <property type="evidence" value="ECO:0007669"/>
    <property type="project" value="UniProtKB-UniPathway"/>
</dbReference>
<dbReference type="GO" id="GO:0016125">
    <property type="term" value="P:sterol metabolic process"/>
    <property type="evidence" value="ECO:0007669"/>
    <property type="project" value="TreeGrafter"/>
</dbReference>
<dbReference type="CDD" id="cd11043">
    <property type="entry name" value="CYP90-like"/>
    <property type="match status" value="1"/>
</dbReference>
<dbReference type="FunFam" id="1.10.630.10:FF:000022">
    <property type="entry name" value="Taxadiene 5-alpha hydroxylase"/>
    <property type="match status" value="1"/>
</dbReference>
<dbReference type="Gene3D" id="1.10.630.10">
    <property type="entry name" value="Cytochrome P450"/>
    <property type="match status" value="1"/>
</dbReference>
<dbReference type="InterPro" id="IPR001128">
    <property type="entry name" value="Cyt_P450"/>
</dbReference>
<dbReference type="InterPro" id="IPR017972">
    <property type="entry name" value="Cyt_P450_CS"/>
</dbReference>
<dbReference type="InterPro" id="IPR002401">
    <property type="entry name" value="Cyt_P450_E_grp-I"/>
</dbReference>
<dbReference type="InterPro" id="IPR036396">
    <property type="entry name" value="Cyt_P450_sf"/>
</dbReference>
<dbReference type="PANTHER" id="PTHR24286">
    <property type="entry name" value="CYTOCHROME P450 26"/>
    <property type="match status" value="1"/>
</dbReference>
<dbReference type="PANTHER" id="PTHR24286:SF384">
    <property type="entry name" value="P450, PUTATIVE (EUROFUNG)-RELATED"/>
    <property type="match status" value="1"/>
</dbReference>
<dbReference type="Pfam" id="PF00067">
    <property type="entry name" value="p450"/>
    <property type="match status" value="1"/>
</dbReference>
<dbReference type="PRINTS" id="PR00463">
    <property type="entry name" value="EP450I"/>
</dbReference>
<dbReference type="PRINTS" id="PR00385">
    <property type="entry name" value="P450"/>
</dbReference>
<dbReference type="SUPFAM" id="SSF48264">
    <property type="entry name" value="Cytochrome P450"/>
    <property type="match status" value="1"/>
</dbReference>
<dbReference type="PROSITE" id="PS00086">
    <property type="entry name" value="CYTOCHROME_P450"/>
    <property type="match status" value="1"/>
</dbReference>
<sequence>MDAMDLTVAKFKEFTQLQSSAILLTVVSGIIVIVILLLRSKRRSSLKLPPGKLGLPLIGESLSFLWALRSNTLEQFVDKRVKKYGNVFKTSLLGQPTVVLCGAAGNRLILSNQEKLLSRTVSDRVAKLTGDTSISVIAGDSHRIIRAAVAGFLGPAGLKIHIGEMSAHIRNHINQVWKGKDEVNVLSLARELVFAISASLFLNINDREEQHQLHKTLETILPGYFSVPINFPGFAFRKALEGNSKRRKHFSVLQEKRRRDLSVGLASRTQDLLSVLLAYEDDKGNPLTDEEVLDNISALIDGSYESTSSQMAMLLKLLSDHPECYEKVVQEQLEIASHKKEGEEITWKDVKAMRYTWQVMQETLRMFAPVFGPRGKAITDIHYDGYTIPKGWQLSWATYSTHQNDTYFNEPDKFMPSRFDEEGGRLAPYTFVPFGGGRRKCPGWEFAKTEILLFVHHFVKTFSAYTPIDPHESIWGRPLPPVPANGFPIKLISRS</sequence>
<reference key="1">
    <citation type="journal article" date="2004" name="Arch. Biochem. Biophys.">
        <title>Molecular cloning and characterization of a cytochrome P450 taxoid 2alpha-hydroxylase involved in Taxol biosynthesis.</title>
        <authorList>
            <person name="Chau M."/>
            <person name="Croteau R."/>
        </authorList>
    </citation>
    <scope>NUCLEOTIDE SEQUENCE [MRNA]</scope>
    <scope>FUNCTION</scope>
    <scope>CATALYTIC ACTIVITY</scope>
    <scope>BIOPHYSICOCHEMICAL PROPERTIES</scope>
    <scope>SUBCELLULAR LOCATION</scope>
</reference>